<keyword id="KW-0963">Cytoplasm</keyword>
<keyword id="KW-0489">Methyltransferase</keyword>
<keyword id="KW-1185">Reference proteome</keyword>
<keyword id="KW-0694">RNA-binding</keyword>
<keyword id="KW-0698">rRNA processing</keyword>
<keyword id="KW-0949">S-adenosyl-L-methionine</keyword>
<keyword id="KW-0808">Transferase</keyword>
<comment type="function">
    <text evidence="1">Specifically dimethylates two adjacent adenosines (A1518 and A1519) in the loop of a conserved hairpin near the 3'-end of 16S rRNA in the 30S particle. May play a critical role in biogenesis of 30S subunits.</text>
</comment>
<comment type="catalytic activity">
    <reaction evidence="1">
        <text>adenosine(1518)/adenosine(1519) in 16S rRNA + 4 S-adenosyl-L-methionine = N(6)-dimethyladenosine(1518)/N(6)-dimethyladenosine(1519) in 16S rRNA + 4 S-adenosyl-L-homocysteine + 4 H(+)</text>
        <dbReference type="Rhea" id="RHEA:19609"/>
        <dbReference type="Rhea" id="RHEA-COMP:10232"/>
        <dbReference type="Rhea" id="RHEA-COMP:10233"/>
        <dbReference type="ChEBI" id="CHEBI:15378"/>
        <dbReference type="ChEBI" id="CHEBI:57856"/>
        <dbReference type="ChEBI" id="CHEBI:59789"/>
        <dbReference type="ChEBI" id="CHEBI:74411"/>
        <dbReference type="ChEBI" id="CHEBI:74493"/>
        <dbReference type="EC" id="2.1.1.182"/>
    </reaction>
</comment>
<comment type="subcellular location">
    <subcellularLocation>
        <location evidence="1">Cytoplasm</location>
    </subcellularLocation>
</comment>
<comment type="similarity">
    <text evidence="1">Belongs to the class I-like SAM-binding methyltransferase superfamily. rRNA adenine N(6)-methyltransferase family. RsmA subfamily.</text>
</comment>
<name>RSMA_FUSNN</name>
<gene>
    <name evidence="1" type="primary">rsmA</name>
    <name evidence="1" type="synonym">ksgA</name>
    <name type="ordered locus">FN0287</name>
</gene>
<accession>Q8R6B1</accession>
<feature type="chain" id="PRO_0000101532" description="Ribosomal RNA small subunit methyltransferase A">
    <location>
        <begin position="1"/>
        <end position="264"/>
    </location>
</feature>
<feature type="binding site" evidence="1">
    <location>
        <position position="12"/>
    </location>
    <ligand>
        <name>S-adenosyl-L-methionine</name>
        <dbReference type="ChEBI" id="CHEBI:59789"/>
    </ligand>
</feature>
<feature type="binding site" evidence="1">
    <location>
        <position position="14"/>
    </location>
    <ligand>
        <name>S-adenosyl-L-methionine</name>
        <dbReference type="ChEBI" id="CHEBI:59789"/>
    </ligand>
</feature>
<feature type="binding site" evidence="1">
    <location>
        <position position="40"/>
    </location>
    <ligand>
        <name>S-adenosyl-L-methionine</name>
        <dbReference type="ChEBI" id="CHEBI:59789"/>
    </ligand>
</feature>
<feature type="binding site" evidence="1">
    <location>
        <position position="61"/>
    </location>
    <ligand>
        <name>S-adenosyl-L-methionine</name>
        <dbReference type="ChEBI" id="CHEBI:59789"/>
    </ligand>
</feature>
<feature type="binding site" evidence="1">
    <location>
        <position position="86"/>
    </location>
    <ligand>
        <name>S-adenosyl-L-methionine</name>
        <dbReference type="ChEBI" id="CHEBI:59789"/>
    </ligand>
</feature>
<feature type="binding site" evidence="1">
    <location>
        <position position="105"/>
    </location>
    <ligand>
        <name>S-adenosyl-L-methionine</name>
        <dbReference type="ChEBI" id="CHEBI:59789"/>
    </ligand>
</feature>
<reference key="1">
    <citation type="journal article" date="2002" name="J. Bacteriol.">
        <title>Genome sequence and analysis of the oral bacterium Fusobacterium nucleatum strain ATCC 25586.</title>
        <authorList>
            <person name="Kapatral V."/>
            <person name="Anderson I."/>
            <person name="Ivanova N."/>
            <person name="Reznik G."/>
            <person name="Los T."/>
            <person name="Lykidis A."/>
            <person name="Bhattacharyya A."/>
            <person name="Bartman A."/>
            <person name="Gardner W."/>
            <person name="Grechkin G."/>
            <person name="Zhu L."/>
            <person name="Vasieva O."/>
            <person name="Chu L."/>
            <person name="Kogan Y."/>
            <person name="Chaga O."/>
            <person name="Goltsman E."/>
            <person name="Bernal A."/>
            <person name="Larsen N."/>
            <person name="D'Souza M."/>
            <person name="Walunas T."/>
            <person name="Pusch G."/>
            <person name="Haselkorn R."/>
            <person name="Fonstein M."/>
            <person name="Kyrpides N.C."/>
            <person name="Overbeek R."/>
        </authorList>
    </citation>
    <scope>NUCLEOTIDE SEQUENCE [LARGE SCALE GENOMIC DNA]</scope>
    <source>
        <strain>ATCC 25586 / DSM 15643 / BCRC 10681 / CIP 101130 / JCM 8532 / KCTC 2640 / LMG 13131 / VPI 4355</strain>
    </source>
</reference>
<sequence length="264" mass="30764">MEFKHKKKYGQNFLNNKDEILNKIIEVSNIDDNDEILEIGPGQGALTSLLVERVKKITCVEIDKDLENTLRKKFSSKENYTLVMEDVLEVDLRRYINQGTKVVANIPYYITSPIINKIIENKDLIDEAYIMVQKEVGERICAKSGKERGILTLAVEYYGESEYLFTIPREFFNPIPNVDSAFISIKFYKDDRYKNKISEDLFFKYVKAAFSNKRKNIVNNLVTLGYSKDKIKEILNQIEISENERAENISIDKFIELIKIFEGR</sequence>
<proteinExistence type="inferred from homology"/>
<evidence type="ECO:0000255" key="1">
    <source>
        <dbReference type="HAMAP-Rule" id="MF_00607"/>
    </source>
</evidence>
<protein>
    <recommendedName>
        <fullName evidence="1">Ribosomal RNA small subunit methyltransferase A</fullName>
        <ecNumber evidence="1">2.1.1.182</ecNumber>
    </recommendedName>
    <alternativeName>
        <fullName evidence="1">16S rRNA (adenine(1518)-N(6)/adenine(1519)-N(6))-dimethyltransferase</fullName>
    </alternativeName>
    <alternativeName>
        <fullName evidence="1">16S rRNA dimethyladenosine transferase</fullName>
    </alternativeName>
    <alternativeName>
        <fullName evidence="1">16S rRNA dimethylase</fullName>
    </alternativeName>
    <alternativeName>
        <fullName evidence="1">S-adenosylmethionine-6-N', N'-adenosyl(rRNA) dimethyltransferase</fullName>
    </alternativeName>
</protein>
<organism>
    <name type="scientific">Fusobacterium nucleatum subsp. nucleatum (strain ATCC 25586 / DSM 15643 / BCRC 10681 / CIP 101130 / JCM 8532 / KCTC 2640 / LMG 13131 / VPI 4355)</name>
    <dbReference type="NCBI Taxonomy" id="190304"/>
    <lineage>
        <taxon>Bacteria</taxon>
        <taxon>Fusobacteriati</taxon>
        <taxon>Fusobacteriota</taxon>
        <taxon>Fusobacteriia</taxon>
        <taxon>Fusobacteriales</taxon>
        <taxon>Fusobacteriaceae</taxon>
        <taxon>Fusobacterium</taxon>
    </lineage>
</organism>
<dbReference type="EC" id="2.1.1.182" evidence="1"/>
<dbReference type="EMBL" id="AE009951">
    <property type="protein sequence ID" value="AAL94493.1"/>
    <property type="molecule type" value="Genomic_DNA"/>
</dbReference>
<dbReference type="RefSeq" id="NP_603194.1">
    <property type="nucleotide sequence ID" value="NC_003454.1"/>
</dbReference>
<dbReference type="RefSeq" id="WP_011016282.1">
    <property type="nucleotide sequence ID" value="NZ_CP028101.1"/>
</dbReference>
<dbReference type="SMR" id="Q8R6B1"/>
<dbReference type="FunCoup" id="Q8R6B1">
    <property type="interactions" value="324"/>
</dbReference>
<dbReference type="STRING" id="190304.FN0287"/>
<dbReference type="PaxDb" id="190304-FN0287"/>
<dbReference type="EnsemblBacteria" id="AAL94493">
    <property type="protein sequence ID" value="AAL94493"/>
    <property type="gene ID" value="FN0287"/>
</dbReference>
<dbReference type="GeneID" id="79783298"/>
<dbReference type="KEGG" id="fnu:FN0287"/>
<dbReference type="PATRIC" id="fig|190304.8.peg.867"/>
<dbReference type="eggNOG" id="COG0030">
    <property type="taxonomic scope" value="Bacteria"/>
</dbReference>
<dbReference type="HOGENOM" id="CLU_041220_0_1_0"/>
<dbReference type="InParanoid" id="Q8R6B1"/>
<dbReference type="BioCyc" id="FNUC190304:G1FZS-885-MONOMER"/>
<dbReference type="Proteomes" id="UP000002521">
    <property type="component" value="Chromosome"/>
</dbReference>
<dbReference type="GO" id="GO:0005829">
    <property type="term" value="C:cytosol"/>
    <property type="evidence" value="ECO:0000318"/>
    <property type="project" value="GO_Central"/>
</dbReference>
<dbReference type="GO" id="GO:0052908">
    <property type="term" value="F:16S rRNA (adenine(1518)-N(6)/adenine(1519)-N(6))-dimethyltransferase activity"/>
    <property type="evidence" value="ECO:0007669"/>
    <property type="project" value="UniProtKB-EC"/>
</dbReference>
<dbReference type="GO" id="GO:0003723">
    <property type="term" value="F:RNA binding"/>
    <property type="evidence" value="ECO:0007669"/>
    <property type="project" value="UniProtKB-KW"/>
</dbReference>
<dbReference type="GO" id="GO:0000179">
    <property type="term" value="F:rRNA (adenine-N6,N6-)-dimethyltransferase activity"/>
    <property type="evidence" value="ECO:0000318"/>
    <property type="project" value="GO_Central"/>
</dbReference>
<dbReference type="GO" id="GO:0031167">
    <property type="term" value="P:rRNA methylation"/>
    <property type="evidence" value="ECO:0000318"/>
    <property type="project" value="GO_Central"/>
</dbReference>
<dbReference type="CDD" id="cd02440">
    <property type="entry name" value="AdoMet_MTases"/>
    <property type="match status" value="1"/>
</dbReference>
<dbReference type="Gene3D" id="1.10.8.100">
    <property type="entry name" value="Ribosomal RNA adenine dimethylase-like, domain 2"/>
    <property type="match status" value="1"/>
</dbReference>
<dbReference type="Gene3D" id="3.40.50.150">
    <property type="entry name" value="Vaccinia Virus protein VP39"/>
    <property type="match status" value="1"/>
</dbReference>
<dbReference type="HAMAP" id="MF_00607">
    <property type="entry name" value="16SrRNA_methyltr_A"/>
    <property type="match status" value="1"/>
</dbReference>
<dbReference type="InterPro" id="IPR001737">
    <property type="entry name" value="KsgA/Erm"/>
</dbReference>
<dbReference type="InterPro" id="IPR023165">
    <property type="entry name" value="rRNA_Ade_diMease-like_C"/>
</dbReference>
<dbReference type="InterPro" id="IPR020596">
    <property type="entry name" value="rRNA_Ade_Mease_Trfase_CS"/>
</dbReference>
<dbReference type="InterPro" id="IPR020598">
    <property type="entry name" value="rRNA_Ade_methylase_Trfase_N"/>
</dbReference>
<dbReference type="InterPro" id="IPR011530">
    <property type="entry name" value="rRNA_adenine_dimethylase"/>
</dbReference>
<dbReference type="InterPro" id="IPR029063">
    <property type="entry name" value="SAM-dependent_MTases_sf"/>
</dbReference>
<dbReference type="NCBIfam" id="TIGR00755">
    <property type="entry name" value="ksgA"/>
    <property type="match status" value="1"/>
</dbReference>
<dbReference type="PANTHER" id="PTHR11727">
    <property type="entry name" value="DIMETHYLADENOSINE TRANSFERASE"/>
    <property type="match status" value="1"/>
</dbReference>
<dbReference type="PANTHER" id="PTHR11727:SF7">
    <property type="entry name" value="DIMETHYLADENOSINE TRANSFERASE-RELATED"/>
    <property type="match status" value="1"/>
</dbReference>
<dbReference type="Pfam" id="PF00398">
    <property type="entry name" value="RrnaAD"/>
    <property type="match status" value="1"/>
</dbReference>
<dbReference type="SMART" id="SM00650">
    <property type="entry name" value="rADc"/>
    <property type="match status" value="1"/>
</dbReference>
<dbReference type="SUPFAM" id="SSF53335">
    <property type="entry name" value="S-adenosyl-L-methionine-dependent methyltransferases"/>
    <property type="match status" value="1"/>
</dbReference>
<dbReference type="PROSITE" id="PS01131">
    <property type="entry name" value="RRNA_A_DIMETH"/>
    <property type="match status" value="1"/>
</dbReference>
<dbReference type="PROSITE" id="PS51689">
    <property type="entry name" value="SAM_RNA_A_N6_MT"/>
    <property type="match status" value="1"/>
</dbReference>